<feature type="chain" id="PRO_1000016633" description="tRNA uridine 5-carboxymethylaminomethyl modification enzyme MnmG">
    <location>
        <begin position="1"/>
        <end position="625"/>
    </location>
</feature>
<feature type="binding site" evidence="1">
    <location>
        <begin position="11"/>
        <end position="16"/>
    </location>
    <ligand>
        <name>FAD</name>
        <dbReference type="ChEBI" id="CHEBI:57692"/>
    </ligand>
</feature>
<feature type="binding site" evidence="1">
    <location>
        <begin position="271"/>
        <end position="285"/>
    </location>
    <ligand>
        <name>NAD(+)</name>
        <dbReference type="ChEBI" id="CHEBI:57540"/>
    </ligand>
</feature>
<reference key="1">
    <citation type="journal article" date="2007" name="PLoS Biol.">
        <title>Evolution of symbiotic bacteria in the distal human intestine.</title>
        <authorList>
            <person name="Xu J."/>
            <person name="Mahowald M.A."/>
            <person name="Ley R.E."/>
            <person name="Lozupone C.A."/>
            <person name="Hamady M."/>
            <person name="Martens E.C."/>
            <person name="Henrissat B."/>
            <person name="Coutinho P.M."/>
            <person name="Minx P."/>
            <person name="Latreille P."/>
            <person name="Cordum H."/>
            <person name="Van Brunt A."/>
            <person name="Kim K."/>
            <person name="Fulton R.S."/>
            <person name="Fulton L.A."/>
            <person name="Clifton S.W."/>
            <person name="Wilson R.K."/>
            <person name="Knight R.D."/>
            <person name="Gordon J.I."/>
        </authorList>
    </citation>
    <scope>NUCLEOTIDE SEQUENCE [LARGE SCALE GENOMIC DNA]</scope>
    <source>
        <strain>ATCC 8503 / DSM 20701 / CIP 104284 / JCM 5825 / NCTC 11152</strain>
    </source>
</reference>
<comment type="function">
    <text evidence="1">NAD-binding protein involved in the addition of a carboxymethylaminomethyl (cmnm) group at the wobble position (U34) of certain tRNAs, forming tRNA-cmnm(5)s(2)U34.</text>
</comment>
<comment type="cofactor">
    <cofactor evidence="1">
        <name>FAD</name>
        <dbReference type="ChEBI" id="CHEBI:57692"/>
    </cofactor>
</comment>
<comment type="subunit">
    <text evidence="1">Homodimer. Heterotetramer of two MnmE and two MnmG subunits.</text>
</comment>
<comment type="subcellular location">
    <subcellularLocation>
        <location evidence="1">Cytoplasm</location>
    </subcellularLocation>
</comment>
<comment type="similarity">
    <text evidence="1">Belongs to the MnmG family.</text>
</comment>
<organism>
    <name type="scientific">Parabacteroides distasonis (strain ATCC 8503 / DSM 20701 / CIP 104284 / JCM 5825 / NCTC 11152)</name>
    <dbReference type="NCBI Taxonomy" id="435591"/>
    <lineage>
        <taxon>Bacteria</taxon>
        <taxon>Pseudomonadati</taxon>
        <taxon>Bacteroidota</taxon>
        <taxon>Bacteroidia</taxon>
        <taxon>Bacteroidales</taxon>
        <taxon>Tannerellaceae</taxon>
        <taxon>Parabacteroides</taxon>
    </lineage>
</organism>
<dbReference type="EMBL" id="CP000140">
    <property type="protein sequence ID" value="ABR44673.1"/>
    <property type="molecule type" value="Genomic_DNA"/>
</dbReference>
<dbReference type="RefSeq" id="WP_005860446.1">
    <property type="nucleotide sequence ID" value="NZ_LR215978.1"/>
</dbReference>
<dbReference type="SMR" id="A6LG59"/>
<dbReference type="STRING" id="435591.BDI_2965"/>
<dbReference type="PaxDb" id="435591-BDI_2965"/>
<dbReference type="KEGG" id="pdi:BDI_2965"/>
<dbReference type="eggNOG" id="COG0445">
    <property type="taxonomic scope" value="Bacteria"/>
</dbReference>
<dbReference type="HOGENOM" id="CLU_007831_2_2_10"/>
<dbReference type="BioCyc" id="PDIS435591:G1G5A-3042-MONOMER"/>
<dbReference type="Proteomes" id="UP000000566">
    <property type="component" value="Chromosome"/>
</dbReference>
<dbReference type="GO" id="GO:0005829">
    <property type="term" value="C:cytosol"/>
    <property type="evidence" value="ECO:0007669"/>
    <property type="project" value="TreeGrafter"/>
</dbReference>
<dbReference type="GO" id="GO:0050660">
    <property type="term" value="F:flavin adenine dinucleotide binding"/>
    <property type="evidence" value="ECO:0007669"/>
    <property type="project" value="UniProtKB-UniRule"/>
</dbReference>
<dbReference type="GO" id="GO:0030488">
    <property type="term" value="P:tRNA methylation"/>
    <property type="evidence" value="ECO:0007669"/>
    <property type="project" value="TreeGrafter"/>
</dbReference>
<dbReference type="GO" id="GO:0002098">
    <property type="term" value="P:tRNA wobble uridine modification"/>
    <property type="evidence" value="ECO:0007669"/>
    <property type="project" value="InterPro"/>
</dbReference>
<dbReference type="FunFam" id="1.10.10.1800:FF:000003">
    <property type="entry name" value="tRNA uridine 5-carboxymethylaminomethyl modification enzyme MnmG"/>
    <property type="match status" value="1"/>
</dbReference>
<dbReference type="FunFam" id="1.10.150.570:FF:000001">
    <property type="entry name" value="tRNA uridine 5-carboxymethylaminomethyl modification enzyme MnmG"/>
    <property type="match status" value="1"/>
</dbReference>
<dbReference type="FunFam" id="3.50.50.60:FF:000002">
    <property type="entry name" value="tRNA uridine 5-carboxymethylaminomethyl modification enzyme MnmG"/>
    <property type="match status" value="1"/>
</dbReference>
<dbReference type="FunFam" id="3.50.50.60:FF:000010">
    <property type="entry name" value="tRNA uridine 5-carboxymethylaminomethyl modification enzyme MnmG"/>
    <property type="match status" value="1"/>
</dbReference>
<dbReference type="Gene3D" id="3.50.50.60">
    <property type="entry name" value="FAD/NAD(P)-binding domain"/>
    <property type="match status" value="2"/>
</dbReference>
<dbReference type="Gene3D" id="1.10.150.570">
    <property type="entry name" value="GidA associated domain, C-terminal subdomain"/>
    <property type="match status" value="1"/>
</dbReference>
<dbReference type="Gene3D" id="1.10.10.1800">
    <property type="entry name" value="tRNA uridine 5-carboxymethylaminomethyl modification enzyme MnmG/GidA"/>
    <property type="match status" value="1"/>
</dbReference>
<dbReference type="HAMAP" id="MF_00129">
    <property type="entry name" value="MnmG_GidA"/>
    <property type="match status" value="1"/>
</dbReference>
<dbReference type="InterPro" id="IPR036188">
    <property type="entry name" value="FAD/NAD-bd_sf"/>
</dbReference>
<dbReference type="InterPro" id="IPR049312">
    <property type="entry name" value="GIDA_C_N"/>
</dbReference>
<dbReference type="InterPro" id="IPR004416">
    <property type="entry name" value="MnmG"/>
</dbReference>
<dbReference type="InterPro" id="IPR002218">
    <property type="entry name" value="MnmG-rel"/>
</dbReference>
<dbReference type="InterPro" id="IPR020595">
    <property type="entry name" value="MnmG-rel_CS"/>
</dbReference>
<dbReference type="InterPro" id="IPR026904">
    <property type="entry name" value="MnmG_C"/>
</dbReference>
<dbReference type="InterPro" id="IPR047001">
    <property type="entry name" value="MnmG_C_subdom"/>
</dbReference>
<dbReference type="InterPro" id="IPR044920">
    <property type="entry name" value="MnmG_C_subdom_sf"/>
</dbReference>
<dbReference type="InterPro" id="IPR040131">
    <property type="entry name" value="MnmG_N"/>
</dbReference>
<dbReference type="NCBIfam" id="TIGR00136">
    <property type="entry name" value="mnmG_gidA"/>
    <property type="match status" value="1"/>
</dbReference>
<dbReference type="PANTHER" id="PTHR11806">
    <property type="entry name" value="GLUCOSE INHIBITED DIVISION PROTEIN A"/>
    <property type="match status" value="1"/>
</dbReference>
<dbReference type="PANTHER" id="PTHR11806:SF0">
    <property type="entry name" value="PROTEIN MTO1 HOMOLOG, MITOCHONDRIAL"/>
    <property type="match status" value="1"/>
</dbReference>
<dbReference type="Pfam" id="PF01134">
    <property type="entry name" value="GIDA"/>
    <property type="match status" value="1"/>
</dbReference>
<dbReference type="Pfam" id="PF21680">
    <property type="entry name" value="GIDA_C_1st"/>
    <property type="match status" value="1"/>
</dbReference>
<dbReference type="Pfam" id="PF13932">
    <property type="entry name" value="SAM_GIDA_C"/>
    <property type="match status" value="1"/>
</dbReference>
<dbReference type="SMART" id="SM01228">
    <property type="entry name" value="GIDA_assoc_3"/>
    <property type="match status" value="1"/>
</dbReference>
<dbReference type="SUPFAM" id="SSF51905">
    <property type="entry name" value="FAD/NAD(P)-binding domain"/>
    <property type="match status" value="1"/>
</dbReference>
<dbReference type="PROSITE" id="PS01280">
    <property type="entry name" value="GIDA_1"/>
    <property type="match status" value="1"/>
</dbReference>
<dbReference type="PROSITE" id="PS01281">
    <property type="entry name" value="GIDA_2"/>
    <property type="match status" value="1"/>
</dbReference>
<protein>
    <recommendedName>
        <fullName evidence="1">tRNA uridine 5-carboxymethylaminomethyl modification enzyme MnmG</fullName>
    </recommendedName>
    <alternativeName>
        <fullName evidence="1">Glucose-inhibited division protein A</fullName>
    </alternativeName>
</protein>
<proteinExistence type="inferred from homology"/>
<keyword id="KW-0963">Cytoplasm</keyword>
<keyword id="KW-0274">FAD</keyword>
<keyword id="KW-0285">Flavoprotein</keyword>
<keyword id="KW-0520">NAD</keyword>
<keyword id="KW-1185">Reference proteome</keyword>
<keyword id="KW-0819">tRNA processing</keyword>
<name>MNMG_PARD8</name>
<sequence length="625" mass="69799">MTFNYDVIVVGAGHAGCEAAAAAANLGSKTLLITMDMNKIAQMSCNPAVGGIAKGQIVREIDALGGYMGIVTDQTAIQFRMLNRSKGPAMWSPRAQSDRARFIDCWRGILENMPNLSIWQDMVQELIIEHGQVCGVRTGMNVVFRAGAVVLTNGTFLNGLLHIGRTQIRGGRIAEPAATGLTEQLISLGIQTDRMKTGTPVRIDGRSVHFDEMEEQPGENDFHKFSYMDTSHRKLKQLSCWTTFTNEACHDILREGLPDSPLYNGQIKSIGPRYCPSIETKIVTFADKTQHQLFLEPEGEATQEYYLNGFSSSLPLDIQLRALQAIPAFRDVQIYRPGYAIEYDFFDPTQLRHNLETKQIRNLFFAGQINGTTGYEEAGGQGLVAGINAHINCHGGQPFILGRDEAYIGVLIDDLVTKGVDEPYRMFTSRAEYRILLRQDDADMRLTEKSYQMGLAKQDRYDLLREKKESRDAIIRFAETYSVKPQYINSGLEKLGTAPLSHGCKLFDVVLRPQTTLENLADLVPALRAELDKVPASRKEEIIEAAEILIKYSGYIKREQIIADKINRLENIRIKGKFDYNSIQSLSTEARQKLTRIDPDTIAQASRIPGISPSDINILLVLLGR</sequence>
<accession>A6LG59</accession>
<gene>
    <name evidence="1" type="primary">mnmG</name>
    <name evidence="1" type="synonym">gidA</name>
    <name type="ordered locus">BDI_2965</name>
</gene>
<evidence type="ECO:0000255" key="1">
    <source>
        <dbReference type="HAMAP-Rule" id="MF_00129"/>
    </source>
</evidence>